<dbReference type="EMBL" id="AK096111">
    <property type="protein sequence ID" value="BAC04703.1"/>
    <property type="molecule type" value="mRNA"/>
</dbReference>
<dbReference type="RefSeq" id="NP_848615.1">
    <property type="nucleotide sequence ID" value="NM_178520.3"/>
</dbReference>
<dbReference type="SMR" id="Q8N8V8"/>
<dbReference type="BioMuta" id="TMEM105"/>
<dbReference type="DMDM" id="74729537"/>
<dbReference type="PaxDb" id="9606-ENSP00000329795"/>
<dbReference type="UCSC" id="uc002kad.4">
    <property type="organism name" value="human"/>
</dbReference>
<dbReference type="AGR" id="HGNC:26794"/>
<dbReference type="GeneCards" id="TMEM105"/>
<dbReference type="HGNC" id="HGNC:26794">
    <property type="gene designation" value="TMEM105"/>
</dbReference>
<dbReference type="neXtProt" id="NX_Q8N8V8"/>
<dbReference type="PharmGKB" id="PA142670754"/>
<dbReference type="eggNOG" id="ENOG502TKS0">
    <property type="taxonomic scope" value="Eukaryota"/>
</dbReference>
<dbReference type="HOGENOM" id="CLU_161739_0_0_1"/>
<dbReference type="InParanoid" id="Q8N8V8"/>
<dbReference type="PAN-GO" id="Q8N8V8">
    <property type="GO annotations" value="0 GO annotations based on evolutionary models"/>
</dbReference>
<dbReference type="PhylomeDB" id="Q8N8V8"/>
<dbReference type="TreeFam" id="TF340518"/>
<dbReference type="PathwayCommons" id="Q8N8V8"/>
<dbReference type="SignaLink" id="Q8N8V8"/>
<dbReference type="BioGRID-ORCS" id="284186">
    <property type="hits" value="14 hits in 1140 CRISPR screens"/>
</dbReference>
<dbReference type="GenomeRNAi" id="284186"/>
<dbReference type="Pharos" id="Q8N8V8">
    <property type="development level" value="Tdark"/>
</dbReference>
<dbReference type="PRO" id="PR:Q8N8V8"/>
<dbReference type="Proteomes" id="UP000005640">
    <property type="component" value="Unplaced"/>
</dbReference>
<dbReference type="RNAct" id="Q8N8V8">
    <property type="molecule type" value="protein"/>
</dbReference>
<dbReference type="GO" id="GO:0016020">
    <property type="term" value="C:membrane"/>
    <property type="evidence" value="ECO:0007669"/>
    <property type="project" value="UniProtKB-SubCell"/>
</dbReference>
<sequence length="129" mass="13990">MLLKVRRASLKPPATPHQGAFRAGNVIGQLIYLLTWSLFTAWLRPPTLLQGPRTSPQGSPPRSPWGDCAEPSCLCEMKIRRRRHEGPAWGQSGFLAGGLHLVPSSLSLAACGVVRMKGLWGRGAGIRGR</sequence>
<comment type="subcellular location">
    <subcellularLocation>
        <location evidence="2">Membrane</location>
        <topology evidence="2">Multi-pass membrane protein</topology>
    </subcellularLocation>
</comment>
<protein>
    <recommendedName>
        <fullName>Transmembrane protein 105</fullName>
    </recommendedName>
</protein>
<feature type="chain" id="PRO_0000274356" description="Transmembrane protein 105">
    <location>
        <begin position="1"/>
        <end position="129"/>
    </location>
</feature>
<feature type="transmembrane region" description="Helical" evidence="1">
    <location>
        <begin position="23"/>
        <end position="43"/>
    </location>
</feature>
<feature type="transmembrane region" description="Helical" evidence="1">
    <location>
        <begin position="94"/>
        <end position="114"/>
    </location>
</feature>
<feature type="sequence variant" id="VAR_051426" description="In dbSNP:rs9916085.">
    <original>R</original>
    <variation>W</variation>
    <location>
        <position position="122"/>
    </location>
</feature>
<evidence type="ECO:0000255" key="1"/>
<evidence type="ECO:0000305" key="2"/>
<proteinExistence type="evidence at transcript level"/>
<accession>Q8N8V8</accession>
<reference key="1">
    <citation type="journal article" date="2004" name="Nat. Genet.">
        <title>Complete sequencing and characterization of 21,243 full-length human cDNAs.</title>
        <authorList>
            <person name="Ota T."/>
            <person name="Suzuki Y."/>
            <person name="Nishikawa T."/>
            <person name="Otsuki T."/>
            <person name="Sugiyama T."/>
            <person name="Irie R."/>
            <person name="Wakamatsu A."/>
            <person name="Hayashi K."/>
            <person name="Sato H."/>
            <person name="Nagai K."/>
            <person name="Kimura K."/>
            <person name="Makita H."/>
            <person name="Sekine M."/>
            <person name="Obayashi M."/>
            <person name="Nishi T."/>
            <person name="Shibahara T."/>
            <person name="Tanaka T."/>
            <person name="Ishii S."/>
            <person name="Yamamoto J."/>
            <person name="Saito K."/>
            <person name="Kawai Y."/>
            <person name="Isono Y."/>
            <person name="Nakamura Y."/>
            <person name="Nagahari K."/>
            <person name="Murakami K."/>
            <person name="Yasuda T."/>
            <person name="Iwayanagi T."/>
            <person name="Wagatsuma M."/>
            <person name="Shiratori A."/>
            <person name="Sudo H."/>
            <person name="Hosoiri T."/>
            <person name="Kaku Y."/>
            <person name="Kodaira H."/>
            <person name="Kondo H."/>
            <person name="Sugawara M."/>
            <person name="Takahashi M."/>
            <person name="Kanda K."/>
            <person name="Yokoi T."/>
            <person name="Furuya T."/>
            <person name="Kikkawa E."/>
            <person name="Omura Y."/>
            <person name="Abe K."/>
            <person name="Kamihara K."/>
            <person name="Katsuta N."/>
            <person name="Sato K."/>
            <person name="Tanikawa M."/>
            <person name="Yamazaki M."/>
            <person name="Ninomiya K."/>
            <person name="Ishibashi T."/>
            <person name="Yamashita H."/>
            <person name="Murakawa K."/>
            <person name="Fujimori K."/>
            <person name="Tanai H."/>
            <person name="Kimata M."/>
            <person name="Watanabe M."/>
            <person name="Hiraoka S."/>
            <person name="Chiba Y."/>
            <person name="Ishida S."/>
            <person name="Ono Y."/>
            <person name="Takiguchi S."/>
            <person name="Watanabe S."/>
            <person name="Yosida M."/>
            <person name="Hotuta T."/>
            <person name="Kusano J."/>
            <person name="Kanehori K."/>
            <person name="Takahashi-Fujii A."/>
            <person name="Hara H."/>
            <person name="Tanase T.-O."/>
            <person name="Nomura Y."/>
            <person name="Togiya S."/>
            <person name="Komai F."/>
            <person name="Hara R."/>
            <person name="Takeuchi K."/>
            <person name="Arita M."/>
            <person name="Imose N."/>
            <person name="Musashino K."/>
            <person name="Yuuki H."/>
            <person name="Oshima A."/>
            <person name="Sasaki N."/>
            <person name="Aotsuka S."/>
            <person name="Yoshikawa Y."/>
            <person name="Matsunawa H."/>
            <person name="Ichihara T."/>
            <person name="Shiohata N."/>
            <person name="Sano S."/>
            <person name="Moriya S."/>
            <person name="Momiyama H."/>
            <person name="Satoh N."/>
            <person name="Takami S."/>
            <person name="Terashima Y."/>
            <person name="Suzuki O."/>
            <person name="Nakagawa S."/>
            <person name="Senoh A."/>
            <person name="Mizoguchi H."/>
            <person name="Goto Y."/>
            <person name="Shimizu F."/>
            <person name="Wakebe H."/>
            <person name="Hishigaki H."/>
            <person name="Watanabe T."/>
            <person name="Sugiyama A."/>
            <person name="Takemoto M."/>
            <person name="Kawakami B."/>
            <person name="Yamazaki M."/>
            <person name="Watanabe K."/>
            <person name="Kumagai A."/>
            <person name="Itakura S."/>
            <person name="Fukuzumi Y."/>
            <person name="Fujimori Y."/>
            <person name="Komiyama M."/>
            <person name="Tashiro H."/>
            <person name="Tanigami A."/>
            <person name="Fujiwara T."/>
            <person name="Ono T."/>
            <person name="Yamada K."/>
            <person name="Fujii Y."/>
            <person name="Ozaki K."/>
            <person name="Hirao M."/>
            <person name="Ohmori Y."/>
            <person name="Kawabata A."/>
            <person name="Hikiji T."/>
            <person name="Kobatake N."/>
            <person name="Inagaki H."/>
            <person name="Ikema Y."/>
            <person name="Okamoto S."/>
            <person name="Okitani R."/>
            <person name="Kawakami T."/>
            <person name="Noguchi S."/>
            <person name="Itoh T."/>
            <person name="Shigeta K."/>
            <person name="Senba T."/>
            <person name="Matsumura K."/>
            <person name="Nakajima Y."/>
            <person name="Mizuno T."/>
            <person name="Morinaga M."/>
            <person name="Sasaki M."/>
            <person name="Togashi T."/>
            <person name="Oyama M."/>
            <person name="Hata H."/>
            <person name="Watanabe M."/>
            <person name="Komatsu T."/>
            <person name="Mizushima-Sugano J."/>
            <person name="Satoh T."/>
            <person name="Shirai Y."/>
            <person name="Takahashi Y."/>
            <person name="Nakagawa K."/>
            <person name="Okumura K."/>
            <person name="Nagase T."/>
            <person name="Nomura N."/>
            <person name="Kikuchi H."/>
            <person name="Masuho Y."/>
            <person name="Yamashita R."/>
            <person name="Nakai K."/>
            <person name="Yada T."/>
            <person name="Nakamura Y."/>
            <person name="Ohara O."/>
            <person name="Isogai T."/>
            <person name="Sugano S."/>
        </authorList>
    </citation>
    <scope>NUCLEOTIDE SEQUENCE [LARGE SCALE MRNA]</scope>
    <source>
        <tissue>Liver</tissue>
    </source>
</reference>
<name>TM105_HUMAN</name>
<gene>
    <name type="primary">TMEM105</name>
</gene>
<organism>
    <name type="scientific">Homo sapiens</name>
    <name type="common">Human</name>
    <dbReference type="NCBI Taxonomy" id="9606"/>
    <lineage>
        <taxon>Eukaryota</taxon>
        <taxon>Metazoa</taxon>
        <taxon>Chordata</taxon>
        <taxon>Craniata</taxon>
        <taxon>Vertebrata</taxon>
        <taxon>Euteleostomi</taxon>
        <taxon>Mammalia</taxon>
        <taxon>Eutheria</taxon>
        <taxon>Euarchontoglires</taxon>
        <taxon>Primates</taxon>
        <taxon>Haplorrhini</taxon>
        <taxon>Catarrhini</taxon>
        <taxon>Hominidae</taxon>
        <taxon>Homo</taxon>
    </lineage>
</organism>
<keyword id="KW-0472">Membrane</keyword>
<keyword id="KW-1185">Reference proteome</keyword>
<keyword id="KW-0812">Transmembrane</keyword>
<keyword id="KW-1133">Transmembrane helix</keyword>